<dbReference type="EC" id="3.2.2.6" evidence="4"/>
<dbReference type="EMBL" id="CP003170">
    <property type="protein sequence ID" value="AEV84044.1"/>
    <property type="molecule type" value="Genomic_DNA"/>
</dbReference>
<dbReference type="RefSeq" id="WP_014690116.1">
    <property type="nucleotide sequence ID" value="NC_017803.1"/>
</dbReference>
<dbReference type="SMR" id="G8SD34"/>
<dbReference type="STRING" id="134676.ACPL_3149"/>
<dbReference type="KEGG" id="ase:ACPL_3149"/>
<dbReference type="PATRIC" id="fig|134676.3.peg.3069"/>
<dbReference type="eggNOG" id="COG2319">
    <property type="taxonomic scope" value="Bacteria"/>
</dbReference>
<dbReference type="HOGENOM" id="CLU_383876_0_0_11"/>
<dbReference type="Proteomes" id="UP000005440">
    <property type="component" value="Chromosome"/>
</dbReference>
<dbReference type="GO" id="GO:0005886">
    <property type="term" value="C:plasma membrane"/>
    <property type="evidence" value="ECO:0007669"/>
    <property type="project" value="UniProtKB-SubCell"/>
</dbReference>
<dbReference type="GO" id="GO:0003953">
    <property type="term" value="F:NAD+ nucleosidase activity"/>
    <property type="evidence" value="ECO:0000314"/>
    <property type="project" value="UniProtKB"/>
</dbReference>
<dbReference type="GO" id="GO:0061809">
    <property type="term" value="F:NAD+ nucleosidase activity, cyclic ADP-ribose generating"/>
    <property type="evidence" value="ECO:0007669"/>
    <property type="project" value="UniProtKB-EC"/>
</dbReference>
<dbReference type="GO" id="GO:0019677">
    <property type="term" value="P:NAD catabolic process"/>
    <property type="evidence" value="ECO:0000314"/>
    <property type="project" value="UniProtKB"/>
</dbReference>
<dbReference type="GO" id="GO:0007165">
    <property type="term" value="P:signal transduction"/>
    <property type="evidence" value="ECO:0007669"/>
    <property type="project" value="InterPro"/>
</dbReference>
<dbReference type="CDD" id="cd00200">
    <property type="entry name" value="WD40"/>
    <property type="match status" value="1"/>
</dbReference>
<dbReference type="Gene3D" id="3.40.50.10140">
    <property type="entry name" value="Toll/interleukin-1 receptor homology (TIR) domain"/>
    <property type="match status" value="1"/>
</dbReference>
<dbReference type="Gene3D" id="2.130.10.10">
    <property type="entry name" value="YVTN repeat-like/Quinoprotein amine dehydrogenase"/>
    <property type="match status" value="3"/>
</dbReference>
<dbReference type="InterPro" id="IPR020472">
    <property type="entry name" value="G-protein_beta_WD-40_rep"/>
</dbReference>
<dbReference type="InterPro" id="IPR000157">
    <property type="entry name" value="TIR_dom"/>
</dbReference>
<dbReference type="InterPro" id="IPR035897">
    <property type="entry name" value="Toll_tir_struct_dom_sf"/>
</dbReference>
<dbReference type="InterPro" id="IPR015943">
    <property type="entry name" value="WD40/YVTN_repeat-like_dom_sf"/>
</dbReference>
<dbReference type="InterPro" id="IPR019775">
    <property type="entry name" value="WD40_repeat_CS"/>
</dbReference>
<dbReference type="InterPro" id="IPR036322">
    <property type="entry name" value="WD40_repeat_dom_sf"/>
</dbReference>
<dbReference type="InterPro" id="IPR001680">
    <property type="entry name" value="WD40_rpt"/>
</dbReference>
<dbReference type="PANTHER" id="PTHR22847:SF637">
    <property type="entry name" value="WD REPEAT DOMAIN 5B"/>
    <property type="match status" value="1"/>
</dbReference>
<dbReference type="PANTHER" id="PTHR22847">
    <property type="entry name" value="WD40 REPEAT PROTEIN"/>
    <property type="match status" value="1"/>
</dbReference>
<dbReference type="Pfam" id="PF13676">
    <property type="entry name" value="TIR_2"/>
    <property type="match status" value="1"/>
</dbReference>
<dbReference type="Pfam" id="PF00400">
    <property type="entry name" value="WD40"/>
    <property type="match status" value="7"/>
</dbReference>
<dbReference type="PRINTS" id="PR00320">
    <property type="entry name" value="GPROTEINBRPT"/>
</dbReference>
<dbReference type="SMART" id="SM00255">
    <property type="entry name" value="TIR"/>
    <property type="match status" value="1"/>
</dbReference>
<dbReference type="SMART" id="SM00320">
    <property type="entry name" value="WD40"/>
    <property type="match status" value="7"/>
</dbReference>
<dbReference type="SUPFAM" id="SSF52200">
    <property type="entry name" value="Toll/Interleukin receptor TIR domain"/>
    <property type="match status" value="1"/>
</dbReference>
<dbReference type="SUPFAM" id="SSF50978">
    <property type="entry name" value="WD40 repeat-like"/>
    <property type="match status" value="1"/>
</dbReference>
<dbReference type="PROSITE" id="PS50104">
    <property type="entry name" value="TIR"/>
    <property type="match status" value="1"/>
</dbReference>
<dbReference type="PROSITE" id="PS00678">
    <property type="entry name" value="WD_REPEATS_1"/>
    <property type="match status" value="5"/>
</dbReference>
<dbReference type="PROSITE" id="PS50082">
    <property type="entry name" value="WD_REPEATS_2"/>
    <property type="match status" value="6"/>
</dbReference>
<dbReference type="PROSITE" id="PS50294">
    <property type="entry name" value="WD_REPEATS_REGION"/>
    <property type="match status" value="1"/>
</dbReference>
<gene>
    <name evidence="7" type="ordered locus">ACPL_3149</name>
</gene>
<keyword id="KW-1003">Cell membrane</keyword>
<keyword id="KW-0175">Coiled coil</keyword>
<keyword id="KW-0378">Hydrolase</keyword>
<keyword id="KW-0472">Membrane</keyword>
<keyword id="KW-0520">NAD</keyword>
<keyword id="KW-1185">Reference proteome</keyword>
<keyword id="KW-0677">Repeat</keyword>
<keyword id="KW-0812">Transmembrane</keyword>
<keyword id="KW-1133">Transmembrane helix</keyword>
<keyword id="KW-0853">WD repeat</keyword>
<evidence type="ECO:0000255" key="1"/>
<evidence type="ECO:0000255" key="2">
    <source>
        <dbReference type="PROSITE-ProRule" id="PRU00204"/>
    </source>
</evidence>
<evidence type="ECO:0000256" key="3">
    <source>
        <dbReference type="SAM" id="MobiDB-lite"/>
    </source>
</evidence>
<evidence type="ECO:0000269" key="4">
    <source>
    </source>
</evidence>
<evidence type="ECO:0000303" key="5">
    <source>
    </source>
</evidence>
<evidence type="ECO:0000305" key="6"/>
<evidence type="ECO:0000312" key="7">
    <source>
        <dbReference type="EMBL" id="AEV84044.1"/>
    </source>
</evidence>
<sequence>MRYDAFISYSHAADGALAPAVQRGLQRLARRWHRPRALEVFRDQTGLAVSHALWSSIKVALDQSEFFVLLASPEAAASPWVNQEIEHWLSRHSVDRLLPVVTSGEWVWDADAGDVDLERSTAVPPALRGVFGEEPRHLDLRWARAEHELDLRHGRFRDAIAELAAGMHGMSKEDLDGEDVIRHRQMLRMRRGALAVVCALLLLVAGTAVAWRNARGEVTATNVALQRQRAATAAEQHRTEEAADQARSQQQIVEAEQQRAQKAAEEARGQQAVAEAEQQRALRAAGEARRQEGIAAAEQRRAQKAAAEARRQRGVADAEKAKANRAAAEAERQRKIAADEQRKAHEAAAEAERQREEAVKQQRIAIGRRLLGQAGEARDRDPRTAIQLGIAARHIYPGPQSQAGLVETLVRTHYAGTVTGHTAVVSAVALSGDGRTLVTDGLDGTVMVWDPTDRAAPRRLAQLTSSTAPVYTVALSGDGRTLVTGSEDGTAMVWDLTDRAAPRRLAQLTGHTDVVDAVALSGDGRTLATGSFDGTAMVWDVTDRAAPRRLAQLTDHTAPVTAVALSGDGRTLATGSDDHTAMVWDLTDRAAPRRLAQLTGHTAGVDAVALSGDGRTLATGSYDGTAMLWDLTDRAAPRRLAQLTGHTAQVYTVALSRDGRTLATGSEDHTAMVWDLTDRAAPRRLAQLTGHTDAVDAVALSGDGRTLATAASITRRCCGM</sequence>
<proteinExistence type="evidence at protein level"/>
<accession>G8SD34</accession>
<organism>
    <name type="scientific">Actinoplanes sp. (strain ATCC 31044 / CBS 674.73 / SE50/110)</name>
    <dbReference type="NCBI Taxonomy" id="134676"/>
    <lineage>
        <taxon>Bacteria</taxon>
        <taxon>Bacillati</taxon>
        <taxon>Actinomycetota</taxon>
        <taxon>Actinomycetes</taxon>
        <taxon>Micromonosporales</taxon>
        <taxon>Micromonosporaceae</taxon>
        <taxon>Actinoplanes</taxon>
    </lineage>
</organism>
<reference key="1">
    <citation type="submission" date="2011-12" db="EMBL/GenBank/DDBJ databases">
        <title>The complete genome sequence of the acarbose producer Actinoplanes sp. SE50/110.</title>
        <authorList>
            <person name="Schwientek P."/>
            <person name="Szczepanowski R."/>
            <person name="Kalinowski J."/>
            <person name="Klein A."/>
            <person name="Selber K."/>
            <person name="Wehmeier U.F."/>
            <person name="Stoye J."/>
            <person name="Puehler A."/>
        </authorList>
    </citation>
    <scope>NUCLEOTIDE SEQUENCE [LARGE SCALE GENOMIC DNA]</scope>
    <source>
        <strain>ATCC 31044 / CBS 674.73 / SE50/110</strain>
    </source>
</reference>
<reference key="2">
    <citation type="journal article" date="2018" name="Curr. Biol.">
        <title>TIR domain proteins are an ancient family of NAD+-consuming enzymes.</title>
        <authorList>
            <person name="Essuman K."/>
            <person name="Summers D.W."/>
            <person name="Sasaki Y."/>
            <person name="Mao X."/>
            <person name="Yim A.K.Y."/>
            <person name="DiAntonio A."/>
            <person name="Milbrandt J."/>
        </authorList>
    </citation>
    <scope>FUNCTION</scope>
    <scope>CATALYTIC ACTIVITY</scope>
</reference>
<feature type="chain" id="PRO_0000449139" description="NAD(+) hydrolase ApTIR">
    <location>
        <begin position="1"/>
        <end position="720"/>
    </location>
</feature>
<feature type="transmembrane region" description="Helical" evidence="1">
    <location>
        <begin position="192"/>
        <end position="211"/>
    </location>
</feature>
<feature type="domain" description="TIR" evidence="2">
    <location>
        <begin position="1"/>
        <end position="131"/>
    </location>
</feature>
<feature type="repeat" description="WD 1" evidence="1">
    <location>
        <begin position="420"/>
        <end position="459"/>
    </location>
</feature>
<feature type="repeat" description="WD 2" evidence="1">
    <location>
        <begin position="465"/>
        <end position="504"/>
    </location>
</feature>
<feature type="repeat" description="WD 3" evidence="1">
    <location>
        <begin position="510"/>
        <end position="549"/>
    </location>
</feature>
<feature type="repeat" description="WD 4" evidence="1">
    <location>
        <begin position="555"/>
        <end position="594"/>
    </location>
</feature>
<feature type="repeat" description="WD 5" evidence="1">
    <location>
        <begin position="600"/>
        <end position="639"/>
    </location>
</feature>
<feature type="repeat" description="WD 6" evidence="1">
    <location>
        <begin position="645"/>
        <end position="684"/>
    </location>
</feature>
<feature type="repeat" description="WD 7" evidence="1">
    <location>
        <begin position="690"/>
        <end position="720"/>
    </location>
</feature>
<feature type="region of interest" description="Disordered" evidence="3">
    <location>
        <begin position="231"/>
        <end position="275"/>
    </location>
</feature>
<feature type="region of interest" description="Disordered" evidence="3">
    <location>
        <begin position="292"/>
        <end position="359"/>
    </location>
</feature>
<feature type="coiled-coil region" evidence="1">
    <location>
        <begin position="313"/>
        <end position="362"/>
    </location>
</feature>
<feature type="compositionally biased region" description="Basic and acidic residues" evidence="3">
    <location>
        <begin position="256"/>
        <end position="268"/>
    </location>
</feature>
<feature type="compositionally biased region" description="Basic and acidic residues" evidence="3">
    <location>
        <begin position="307"/>
        <end position="359"/>
    </location>
</feature>
<feature type="active site" evidence="2">
    <location>
        <position position="84"/>
    </location>
</feature>
<feature type="binding site" evidence="2">
    <location>
        <begin position="10"/>
        <end position="11"/>
    </location>
    <ligand>
        <name>NAD(+)</name>
        <dbReference type="ChEBI" id="CHEBI:57540"/>
    </ligand>
</feature>
<feature type="binding site" evidence="2">
    <location>
        <position position="48"/>
    </location>
    <ligand>
        <name>NAD(+)</name>
        <dbReference type="ChEBI" id="CHEBI:57540"/>
    </ligand>
</feature>
<protein>
    <recommendedName>
        <fullName evidence="6">NAD(+) hydrolase ApTIR</fullName>
        <ecNumber evidence="4">3.2.2.6</ecNumber>
    </recommendedName>
    <alternativeName>
        <fullName evidence="5">TIR domain-containing protein in actinoplanes</fullName>
        <shortName evidence="5">ApTIR</shortName>
    </alternativeName>
</protein>
<comment type="function">
    <text evidence="4">NAD(+) hydrolase (NADase) that catalyzes cleavage of NAD(+) into ADP-D-ribose (ADPR) and nicotinamide.</text>
</comment>
<comment type="catalytic activity">
    <reaction evidence="4">
        <text>NAD(+) + H2O = ADP-D-ribose + nicotinamide + H(+)</text>
        <dbReference type="Rhea" id="RHEA:16301"/>
        <dbReference type="ChEBI" id="CHEBI:15377"/>
        <dbReference type="ChEBI" id="CHEBI:15378"/>
        <dbReference type="ChEBI" id="CHEBI:17154"/>
        <dbReference type="ChEBI" id="CHEBI:57540"/>
        <dbReference type="ChEBI" id="CHEBI:57967"/>
        <dbReference type="EC" id="3.2.2.6"/>
    </reaction>
    <physiologicalReaction direction="left-to-right" evidence="4">
        <dbReference type="Rhea" id="RHEA:16302"/>
    </physiologicalReaction>
</comment>
<comment type="subcellular location">
    <subcellularLocation>
        <location evidence="1">Cell membrane</location>
        <topology evidence="1">Single-pass membrane protein</topology>
    </subcellularLocation>
</comment>
<comment type="domain">
    <text evidence="2">The TIR domain mediates NAD(+) hydrolase (NADase) activity. Self-association of TIR domains is required for NADase activity.</text>
</comment>
<name>APTIR_ACTS5</name>